<dbReference type="EMBL" id="CP000308">
    <property type="protein sequence ID" value="ABG15233.1"/>
    <property type="molecule type" value="Genomic_DNA"/>
</dbReference>
<dbReference type="RefSeq" id="WP_002212324.1">
    <property type="nucleotide sequence ID" value="NZ_CP009906.1"/>
</dbReference>
<dbReference type="SMR" id="Q1C2T9"/>
<dbReference type="GeneID" id="97454225"/>
<dbReference type="KEGG" id="ypa:YPA_3271"/>
<dbReference type="Proteomes" id="UP000001971">
    <property type="component" value="Chromosome"/>
</dbReference>
<dbReference type="GO" id="GO:0015935">
    <property type="term" value="C:small ribosomal subunit"/>
    <property type="evidence" value="ECO:0007669"/>
    <property type="project" value="InterPro"/>
</dbReference>
<dbReference type="GO" id="GO:0019843">
    <property type="term" value="F:rRNA binding"/>
    <property type="evidence" value="ECO:0007669"/>
    <property type="project" value="UniProtKB-UniRule"/>
</dbReference>
<dbReference type="GO" id="GO:0003735">
    <property type="term" value="F:structural constituent of ribosome"/>
    <property type="evidence" value="ECO:0007669"/>
    <property type="project" value="InterPro"/>
</dbReference>
<dbReference type="GO" id="GO:0000049">
    <property type="term" value="F:tRNA binding"/>
    <property type="evidence" value="ECO:0007669"/>
    <property type="project" value="UniProtKB-UniRule"/>
</dbReference>
<dbReference type="GO" id="GO:0006412">
    <property type="term" value="P:translation"/>
    <property type="evidence" value="ECO:0007669"/>
    <property type="project" value="UniProtKB-UniRule"/>
</dbReference>
<dbReference type="CDD" id="cd14869">
    <property type="entry name" value="uS7_Bacteria"/>
    <property type="match status" value="1"/>
</dbReference>
<dbReference type="FunFam" id="1.10.455.10:FF:000001">
    <property type="entry name" value="30S ribosomal protein S7"/>
    <property type="match status" value="1"/>
</dbReference>
<dbReference type="Gene3D" id="1.10.455.10">
    <property type="entry name" value="Ribosomal protein S7 domain"/>
    <property type="match status" value="1"/>
</dbReference>
<dbReference type="HAMAP" id="MF_00480_B">
    <property type="entry name" value="Ribosomal_uS7_B"/>
    <property type="match status" value="1"/>
</dbReference>
<dbReference type="InterPro" id="IPR000235">
    <property type="entry name" value="Ribosomal_uS7"/>
</dbReference>
<dbReference type="InterPro" id="IPR005717">
    <property type="entry name" value="Ribosomal_uS7_bac/org-type"/>
</dbReference>
<dbReference type="InterPro" id="IPR020606">
    <property type="entry name" value="Ribosomal_uS7_CS"/>
</dbReference>
<dbReference type="InterPro" id="IPR023798">
    <property type="entry name" value="Ribosomal_uS7_dom"/>
</dbReference>
<dbReference type="InterPro" id="IPR036823">
    <property type="entry name" value="Ribosomal_uS7_dom_sf"/>
</dbReference>
<dbReference type="NCBIfam" id="TIGR01029">
    <property type="entry name" value="rpsG_bact"/>
    <property type="match status" value="1"/>
</dbReference>
<dbReference type="PANTHER" id="PTHR11205">
    <property type="entry name" value="RIBOSOMAL PROTEIN S7"/>
    <property type="match status" value="1"/>
</dbReference>
<dbReference type="Pfam" id="PF00177">
    <property type="entry name" value="Ribosomal_S7"/>
    <property type="match status" value="1"/>
</dbReference>
<dbReference type="PIRSF" id="PIRSF002122">
    <property type="entry name" value="RPS7p_RPS7a_RPS5e_RPS7o"/>
    <property type="match status" value="1"/>
</dbReference>
<dbReference type="SUPFAM" id="SSF47973">
    <property type="entry name" value="Ribosomal protein S7"/>
    <property type="match status" value="1"/>
</dbReference>
<dbReference type="PROSITE" id="PS00052">
    <property type="entry name" value="RIBOSOMAL_S7"/>
    <property type="match status" value="1"/>
</dbReference>
<name>RS7_YERPA</name>
<evidence type="ECO:0000255" key="1">
    <source>
        <dbReference type="HAMAP-Rule" id="MF_00480"/>
    </source>
</evidence>
<evidence type="ECO:0000305" key="2"/>
<accession>Q1C2T9</accession>
<comment type="function">
    <text evidence="1">One of the primary rRNA binding proteins, it binds directly to 16S rRNA where it nucleates assembly of the head domain of the 30S subunit. Is located at the subunit interface close to the decoding center, probably blocks exit of the E-site tRNA.</text>
</comment>
<comment type="subunit">
    <text evidence="1">Part of the 30S ribosomal subunit. Contacts proteins S9 and S11.</text>
</comment>
<comment type="similarity">
    <text evidence="1">Belongs to the universal ribosomal protein uS7 family.</text>
</comment>
<sequence length="156" mass="17606">MPRRRVIGQRKILPDPKFGSELLAKFVNILMVDGKKSTAEAIVYTALETLAQRSGKDFLEAFEVALDNVRPTVEVKSRRVGGSTYQVPVEVRPVRRNALAMRWIVDAARKRGDKSMALRLANELSDAAENKGSAVKKREDVHRMAEANKAFAHYRW</sequence>
<proteinExistence type="inferred from homology"/>
<protein>
    <recommendedName>
        <fullName evidence="1">Small ribosomal subunit protein uS7</fullName>
    </recommendedName>
    <alternativeName>
        <fullName evidence="2">30S ribosomal protein S7</fullName>
    </alternativeName>
</protein>
<organism>
    <name type="scientific">Yersinia pestis bv. Antiqua (strain Antiqua)</name>
    <dbReference type="NCBI Taxonomy" id="360102"/>
    <lineage>
        <taxon>Bacteria</taxon>
        <taxon>Pseudomonadati</taxon>
        <taxon>Pseudomonadota</taxon>
        <taxon>Gammaproteobacteria</taxon>
        <taxon>Enterobacterales</taxon>
        <taxon>Yersiniaceae</taxon>
        <taxon>Yersinia</taxon>
    </lineage>
</organism>
<feature type="chain" id="PRO_1000014321" description="Small ribosomal subunit protein uS7">
    <location>
        <begin position="1"/>
        <end position="156"/>
    </location>
</feature>
<gene>
    <name evidence="1" type="primary">rpsG</name>
    <name type="ordered locus">YPA_3271</name>
</gene>
<reference key="1">
    <citation type="journal article" date="2006" name="J. Bacteriol.">
        <title>Complete genome sequence of Yersinia pestis strains Antiqua and Nepal516: evidence of gene reduction in an emerging pathogen.</title>
        <authorList>
            <person name="Chain P.S.G."/>
            <person name="Hu P."/>
            <person name="Malfatti S.A."/>
            <person name="Radnedge L."/>
            <person name="Larimer F."/>
            <person name="Vergez L.M."/>
            <person name="Worsham P."/>
            <person name="Chu M.C."/>
            <person name="Andersen G.L."/>
        </authorList>
    </citation>
    <scope>NUCLEOTIDE SEQUENCE [LARGE SCALE GENOMIC DNA]</scope>
    <source>
        <strain>Antiqua</strain>
    </source>
</reference>
<keyword id="KW-0687">Ribonucleoprotein</keyword>
<keyword id="KW-0689">Ribosomal protein</keyword>
<keyword id="KW-0694">RNA-binding</keyword>
<keyword id="KW-0699">rRNA-binding</keyword>
<keyword id="KW-0820">tRNA-binding</keyword>